<dbReference type="EC" id="2.7.1.50" evidence="1"/>
<dbReference type="EMBL" id="AJ938182">
    <property type="protein sequence ID" value="CAI81665.1"/>
    <property type="molecule type" value="Genomic_DNA"/>
</dbReference>
<dbReference type="RefSeq" id="WP_001108490.1">
    <property type="nucleotide sequence ID" value="NC_007622.1"/>
</dbReference>
<dbReference type="SMR" id="Q2YUL1"/>
<dbReference type="KEGG" id="sab:SAB1976c"/>
<dbReference type="HOGENOM" id="CLU_019943_0_2_9"/>
<dbReference type="UniPathway" id="UPA00060">
    <property type="reaction ID" value="UER00139"/>
</dbReference>
<dbReference type="GO" id="GO:0005524">
    <property type="term" value="F:ATP binding"/>
    <property type="evidence" value="ECO:0007669"/>
    <property type="project" value="UniProtKB-UniRule"/>
</dbReference>
<dbReference type="GO" id="GO:0004417">
    <property type="term" value="F:hydroxyethylthiazole kinase activity"/>
    <property type="evidence" value="ECO:0007669"/>
    <property type="project" value="UniProtKB-UniRule"/>
</dbReference>
<dbReference type="GO" id="GO:0000287">
    <property type="term" value="F:magnesium ion binding"/>
    <property type="evidence" value="ECO:0007669"/>
    <property type="project" value="UniProtKB-UniRule"/>
</dbReference>
<dbReference type="GO" id="GO:0009228">
    <property type="term" value="P:thiamine biosynthetic process"/>
    <property type="evidence" value="ECO:0007669"/>
    <property type="project" value="UniProtKB-KW"/>
</dbReference>
<dbReference type="GO" id="GO:0009229">
    <property type="term" value="P:thiamine diphosphate biosynthetic process"/>
    <property type="evidence" value="ECO:0007669"/>
    <property type="project" value="UniProtKB-UniRule"/>
</dbReference>
<dbReference type="CDD" id="cd01170">
    <property type="entry name" value="THZ_kinase"/>
    <property type="match status" value="1"/>
</dbReference>
<dbReference type="Gene3D" id="3.40.1190.20">
    <property type="match status" value="1"/>
</dbReference>
<dbReference type="HAMAP" id="MF_00228">
    <property type="entry name" value="Thz_kinase"/>
    <property type="match status" value="1"/>
</dbReference>
<dbReference type="InterPro" id="IPR000417">
    <property type="entry name" value="Hyethyz_kinase"/>
</dbReference>
<dbReference type="InterPro" id="IPR029056">
    <property type="entry name" value="Ribokinase-like"/>
</dbReference>
<dbReference type="NCBIfam" id="NF006830">
    <property type="entry name" value="PRK09355.1"/>
    <property type="match status" value="1"/>
</dbReference>
<dbReference type="Pfam" id="PF02110">
    <property type="entry name" value="HK"/>
    <property type="match status" value="1"/>
</dbReference>
<dbReference type="PIRSF" id="PIRSF000513">
    <property type="entry name" value="Thz_kinase"/>
    <property type="match status" value="1"/>
</dbReference>
<dbReference type="PRINTS" id="PR01099">
    <property type="entry name" value="HYETHTZKNASE"/>
</dbReference>
<dbReference type="SUPFAM" id="SSF53613">
    <property type="entry name" value="Ribokinase-like"/>
    <property type="match status" value="1"/>
</dbReference>
<accession>Q2YUL1</accession>
<feature type="chain" id="PRO_1000021534" description="Hydroxyethylthiazole kinase">
    <location>
        <begin position="1"/>
        <end position="263"/>
    </location>
</feature>
<feature type="binding site" evidence="1">
    <location>
        <position position="39"/>
    </location>
    <ligand>
        <name>substrate</name>
    </ligand>
</feature>
<feature type="binding site" evidence="1">
    <location>
        <position position="115"/>
    </location>
    <ligand>
        <name>ATP</name>
        <dbReference type="ChEBI" id="CHEBI:30616"/>
    </ligand>
</feature>
<feature type="binding site" evidence="1">
    <location>
        <position position="160"/>
    </location>
    <ligand>
        <name>ATP</name>
        <dbReference type="ChEBI" id="CHEBI:30616"/>
    </ligand>
</feature>
<feature type="binding site" evidence="1">
    <location>
        <position position="187"/>
    </location>
    <ligand>
        <name>substrate</name>
    </ligand>
</feature>
<comment type="function">
    <text evidence="1">Catalyzes the phosphorylation of the hydroxyl group of 4-methyl-5-beta-hydroxyethylthiazole (THZ).</text>
</comment>
<comment type="catalytic activity">
    <reaction evidence="1">
        <text>5-(2-hydroxyethyl)-4-methylthiazole + ATP = 4-methyl-5-(2-phosphooxyethyl)-thiazole + ADP + H(+)</text>
        <dbReference type="Rhea" id="RHEA:24212"/>
        <dbReference type="ChEBI" id="CHEBI:15378"/>
        <dbReference type="ChEBI" id="CHEBI:17957"/>
        <dbReference type="ChEBI" id="CHEBI:30616"/>
        <dbReference type="ChEBI" id="CHEBI:58296"/>
        <dbReference type="ChEBI" id="CHEBI:456216"/>
        <dbReference type="EC" id="2.7.1.50"/>
    </reaction>
</comment>
<comment type="cofactor">
    <cofactor evidence="1">
        <name>Mg(2+)</name>
        <dbReference type="ChEBI" id="CHEBI:18420"/>
    </cofactor>
</comment>
<comment type="pathway">
    <text evidence="1">Cofactor biosynthesis; thiamine diphosphate biosynthesis; 4-methyl-5-(2-phosphoethyl)-thiazole from 5-(2-hydroxyethyl)-4-methylthiazole: step 1/1.</text>
</comment>
<comment type="similarity">
    <text evidence="1">Belongs to the Thz kinase family.</text>
</comment>
<evidence type="ECO:0000255" key="1">
    <source>
        <dbReference type="HAMAP-Rule" id="MF_00228"/>
    </source>
</evidence>
<keyword id="KW-0067">ATP-binding</keyword>
<keyword id="KW-0418">Kinase</keyword>
<keyword id="KW-0460">Magnesium</keyword>
<keyword id="KW-0479">Metal-binding</keyword>
<keyword id="KW-0547">Nucleotide-binding</keyword>
<keyword id="KW-0784">Thiamine biosynthesis</keyword>
<keyword id="KW-0808">Transferase</keyword>
<sequence>MNYLNKIRIENPLTICYTNDVVKNFTANGLLSIGASPAMSEAPEEAEEFYKVAQALLINIGTLTAQNEQDIIAIAQTANEAGLPIVFDPVAVGASTYRKQFCKLLLKSAKVSVIKGNASEILALIDDTATMKGTDSDAYLDAVAIAKKAYAIYKTAIVITGKEDVIVQGDKAIVLANGSPLLARVTGAGCLLGGIIAGFLFRETEPDIEALIEAVSVFNIAAEVAAENENCGGPGTFSPLLLDTLYHLNETTYQQRICIQEVE</sequence>
<gene>
    <name evidence="1" type="primary">thiM</name>
    <name type="ordered locus">SAB1976c</name>
</gene>
<name>THIM_STAAB</name>
<proteinExistence type="inferred from homology"/>
<reference key="1">
    <citation type="journal article" date="2007" name="PLoS ONE">
        <title>Molecular correlates of host specialization in Staphylococcus aureus.</title>
        <authorList>
            <person name="Herron-Olson L."/>
            <person name="Fitzgerald J.R."/>
            <person name="Musser J.M."/>
            <person name="Kapur V."/>
        </authorList>
    </citation>
    <scope>NUCLEOTIDE SEQUENCE [LARGE SCALE GENOMIC DNA]</scope>
    <source>
        <strain>bovine RF122 / ET3-1</strain>
    </source>
</reference>
<protein>
    <recommendedName>
        <fullName evidence="1">Hydroxyethylthiazole kinase</fullName>
        <ecNumber evidence="1">2.7.1.50</ecNumber>
    </recommendedName>
    <alternativeName>
        <fullName evidence="1">4-methyl-5-beta-hydroxyethylthiazole kinase</fullName>
        <shortName evidence="1">TH kinase</shortName>
        <shortName evidence="1">Thz kinase</shortName>
    </alternativeName>
</protein>
<organism>
    <name type="scientific">Staphylococcus aureus (strain bovine RF122 / ET3-1)</name>
    <dbReference type="NCBI Taxonomy" id="273036"/>
    <lineage>
        <taxon>Bacteria</taxon>
        <taxon>Bacillati</taxon>
        <taxon>Bacillota</taxon>
        <taxon>Bacilli</taxon>
        <taxon>Bacillales</taxon>
        <taxon>Staphylococcaceae</taxon>
        <taxon>Staphylococcus</taxon>
    </lineage>
</organism>